<sequence>MQKTKMIFTVGPASETEEIVTAFIKAGMNASRHNFSHGDHAEHGGRIALVKKVRAKLNKPVAICLDTKGPEIRTGDFNPSKLELQKGSKFTIVCGEEIVGDATKCSISYKDLYKDVKPGNTILIDDGLVGLTVEAIEGTNVICTVANTGLVGSHKGVNVPNVSIQLPAMTEKDKSDLIFGCKEEIDMVSASFIRKPEDVLAIRKVLNENGGENIQIFSKIENQEGVDNIDAIIEVSDGIMVARGDMGVEIPIQRVPLIQKMIIKKCNAVGKPVITATQMLDSMMRNPRPTRAEASDIANAIFDGTDAIMLSGESANGSYPIEAVTTMAKIAQEAENEINYDKFLAERKGNEKKNTSDVISLGTCTAAADLEASAIITATQTGSTARTVSKYRPKAPVIAVTPSEKVARKLAMSWGVHPIISDKFGSTDELISTSVDKALEAGYVQKGDLVVVAAGVPTNVSGTTNMLKVQVVE</sequence>
<accession>O08309</accession>
<feature type="chain" id="PRO_0000112064" description="Pyruvate kinase">
    <location>
        <begin position="1"/>
        <end position="473"/>
    </location>
</feature>
<feature type="binding site" evidence="1">
    <location>
        <position position="32"/>
    </location>
    <ligand>
        <name>substrate</name>
    </ligand>
</feature>
<feature type="binding site" evidence="2">
    <location>
        <begin position="34"/>
        <end position="37"/>
    </location>
    <ligand>
        <name>ATP</name>
        <dbReference type="ChEBI" id="CHEBI:30616"/>
    </ligand>
</feature>
<feature type="binding site" evidence="1">
    <location>
        <position position="34"/>
    </location>
    <ligand>
        <name>K(+)</name>
        <dbReference type="ChEBI" id="CHEBI:29103"/>
    </ligand>
</feature>
<feature type="binding site" evidence="1">
    <location>
        <position position="36"/>
    </location>
    <ligand>
        <name>K(+)</name>
        <dbReference type="ChEBI" id="CHEBI:29103"/>
    </ligand>
</feature>
<feature type="binding site" evidence="1">
    <location>
        <position position="66"/>
    </location>
    <ligand>
        <name>K(+)</name>
        <dbReference type="ChEBI" id="CHEBI:29103"/>
    </ligand>
</feature>
<feature type="binding site" evidence="1">
    <location>
        <position position="67"/>
    </location>
    <ligand>
        <name>K(+)</name>
        <dbReference type="ChEBI" id="CHEBI:29103"/>
    </ligand>
</feature>
<feature type="binding site" evidence="2">
    <location>
        <position position="73"/>
    </location>
    <ligand>
        <name>ATP</name>
        <dbReference type="ChEBI" id="CHEBI:30616"/>
    </ligand>
</feature>
<feature type="binding site" evidence="2">
    <location>
        <position position="155"/>
    </location>
    <ligand>
        <name>ATP</name>
        <dbReference type="ChEBI" id="CHEBI:30616"/>
    </ligand>
</feature>
<feature type="binding site" evidence="1">
    <location>
        <position position="221"/>
    </location>
    <ligand>
        <name>Mg(2+)</name>
        <dbReference type="ChEBI" id="CHEBI:18420"/>
    </ligand>
</feature>
<feature type="binding site" evidence="1">
    <location>
        <position position="244"/>
    </location>
    <ligand>
        <name>substrate</name>
    </ligand>
</feature>
<feature type="binding site" evidence="1">
    <location>
        <position position="245"/>
    </location>
    <ligand>
        <name>Mg(2+)</name>
        <dbReference type="ChEBI" id="CHEBI:18420"/>
    </ligand>
</feature>
<feature type="binding site" evidence="1">
    <location>
        <position position="245"/>
    </location>
    <ligand>
        <name>substrate</name>
    </ligand>
</feature>
<feature type="binding site" evidence="1">
    <location>
        <position position="277"/>
    </location>
    <ligand>
        <name>substrate</name>
    </ligand>
</feature>
<feature type="site" description="Transition state stabilizer" evidence="1">
    <location>
        <position position="219"/>
    </location>
</feature>
<organism>
    <name type="scientific">Clostridium acetobutylicum (strain ATCC 824 / DSM 792 / JCM 1419 / IAM 19013 / LMG 5710 / NBRC 13948 / NRRL B-527 / VKM B-1787 / 2291 / W)</name>
    <dbReference type="NCBI Taxonomy" id="272562"/>
    <lineage>
        <taxon>Bacteria</taxon>
        <taxon>Bacillati</taxon>
        <taxon>Bacillota</taxon>
        <taxon>Clostridia</taxon>
        <taxon>Eubacteriales</taxon>
        <taxon>Clostridiaceae</taxon>
        <taxon>Clostridium</taxon>
    </lineage>
</organism>
<reference key="1">
    <citation type="journal article" date="2001" name="J. Bacteriol.">
        <title>Genome sequence and comparative analysis of the solvent-producing bacterium Clostridium acetobutylicum.</title>
        <authorList>
            <person name="Noelling J."/>
            <person name="Breton G."/>
            <person name="Omelchenko M.V."/>
            <person name="Makarova K.S."/>
            <person name="Zeng Q."/>
            <person name="Gibson R."/>
            <person name="Lee H.M."/>
            <person name="Dubois J."/>
            <person name="Qiu D."/>
            <person name="Hitti J."/>
            <person name="Wolf Y.I."/>
            <person name="Tatusov R.L."/>
            <person name="Sabathe F."/>
            <person name="Doucette-Stamm L.A."/>
            <person name="Soucaille P."/>
            <person name="Daly M.J."/>
            <person name="Bennett G.N."/>
            <person name="Koonin E.V."/>
            <person name="Smith D.R."/>
        </authorList>
    </citation>
    <scope>NUCLEOTIDE SEQUENCE [LARGE SCALE GENOMIC DNA]</scope>
    <source>
        <strain>ATCC 824 / DSM 792 / JCM 1419 / IAM 19013 / LMG 5710 / NBRC 13948 / NRRL B-527 / VKM B-1787 / 2291 / W</strain>
    </source>
</reference>
<reference key="2">
    <citation type="journal article" date="1998" name="Curr. Microbiol.">
        <title>Cloning, sequence, and expression of the phosphofructokinase gene of Clostridium acetobutylicum ATCC 824 in Escherichia coli.</title>
        <authorList>
            <person name="Belouski E."/>
            <person name="Watson D.E."/>
            <person name="Bennett G.N."/>
        </authorList>
    </citation>
    <scope>NUCLEOTIDE SEQUENCE [GENOMIC DNA] OF 1-39</scope>
    <source>
        <strain>ATCC 824 / DSM 792 / JCM 1419 / IAM 19013 / LMG 5710 / NBRC 13948 / NRRL B-527 / VKM B-1787 / 2291 / W</strain>
    </source>
</reference>
<evidence type="ECO:0000250" key="1"/>
<evidence type="ECO:0000250" key="2">
    <source>
        <dbReference type="UniProtKB" id="P14618"/>
    </source>
</evidence>
<evidence type="ECO:0000305" key="3"/>
<protein>
    <recommendedName>
        <fullName>Pyruvate kinase</fullName>
        <shortName>PK</shortName>
        <ecNumber>2.7.1.40</ecNumber>
    </recommendedName>
</protein>
<dbReference type="EC" id="2.7.1.40"/>
<dbReference type="EMBL" id="AE001437">
    <property type="protein sequence ID" value="AAK78498.1"/>
    <property type="molecule type" value="Genomic_DNA"/>
</dbReference>
<dbReference type="EMBL" id="U52366">
    <property type="protein sequence ID" value="AAB50190.1"/>
    <property type="molecule type" value="Genomic_DNA"/>
</dbReference>
<dbReference type="PIR" id="G96963">
    <property type="entry name" value="G96963"/>
</dbReference>
<dbReference type="RefSeq" id="NP_347158.1">
    <property type="nucleotide sequence ID" value="NC_003030.1"/>
</dbReference>
<dbReference type="RefSeq" id="WP_010963840.1">
    <property type="nucleotide sequence ID" value="NC_003030.1"/>
</dbReference>
<dbReference type="SMR" id="O08309"/>
<dbReference type="STRING" id="272562.CA_C0518"/>
<dbReference type="GeneID" id="44997027"/>
<dbReference type="KEGG" id="cac:CA_C0518"/>
<dbReference type="PATRIC" id="fig|272562.8.peg.717"/>
<dbReference type="eggNOG" id="COG0469">
    <property type="taxonomic scope" value="Bacteria"/>
</dbReference>
<dbReference type="HOGENOM" id="CLU_015439_0_2_9"/>
<dbReference type="OrthoDB" id="9812123at2"/>
<dbReference type="UniPathway" id="UPA00109">
    <property type="reaction ID" value="UER00188"/>
</dbReference>
<dbReference type="Proteomes" id="UP000000814">
    <property type="component" value="Chromosome"/>
</dbReference>
<dbReference type="GO" id="GO:0005524">
    <property type="term" value="F:ATP binding"/>
    <property type="evidence" value="ECO:0007669"/>
    <property type="project" value="UniProtKB-KW"/>
</dbReference>
<dbReference type="GO" id="GO:0016301">
    <property type="term" value="F:kinase activity"/>
    <property type="evidence" value="ECO:0007669"/>
    <property type="project" value="UniProtKB-KW"/>
</dbReference>
<dbReference type="GO" id="GO:0000287">
    <property type="term" value="F:magnesium ion binding"/>
    <property type="evidence" value="ECO:0007669"/>
    <property type="project" value="InterPro"/>
</dbReference>
<dbReference type="GO" id="GO:0030955">
    <property type="term" value="F:potassium ion binding"/>
    <property type="evidence" value="ECO:0007669"/>
    <property type="project" value="InterPro"/>
</dbReference>
<dbReference type="GO" id="GO:0004743">
    <property type="term" value="F:pyruvate kinase activity"/>
    <property type="evidence" value="ECO:0007669"/>
    <property type="project" value="UniProtKB-EC"/>
</dbReference>
<dbReference type="FunFam" id="2.40.33.10:FF:000001">
    <property type="entry name" value="Pyruvate kinase"/>
    <property type="match status" value="1"/>
</dbReference>
<dbReference type="FunFam" id="3.20.20.60:FF:000001">
    <property type="entry name" value="Pyruvate kinase"/>
    <property type="match status" value="1"/>
</dbReference>
<dbReference type="Gene3D" id="3.20.20.60">
    <property type="entry name" value="Phosphoenolpyruvate-binding domains"/>
    <property type="match status" value="1"/>
</dbReference>
<dbReference type="Gene3D" id="2.40.33.10">
    <property type="entry name" value="PK beta-barrel domain-like"/>
    <property type="match status" value="1"/>
</dbReference>
<dbReference type="Gene3D" id="3.40.1380.20">
    <property type="entry name" value="Pyruvate kinase, C-terminal domain"/>
    <property type="match status" value="1"/>
</dbReference>
<dbReference type="InterPro" id="IPR001697">
    <property type="entry name" value="Pyr_Knase"/>
</dbReference>
<dbReference type="InterPro" id="IPR015813">
    <property type="entry name" value="Pyrv/PenolPyrv_kinase-like_dom"/>
</dbReference>
<dbReference type="InterPro" id="IPR040442">
    <property type="entry name" value="Pyrv_kinase-like_dom_sf"/>
</dbReference>
<dbReference type="InterPro" id="IPR011037">
    <property type="entry name" value="Pyrv_Knase-like_insert_dom_sf"/>
</dbReference>
<dbReference type="InterPro" id="IPR015793">
    <property type="entry name" value="Pyrv_Knase_brl"/>
</dbReference>
<dbReference type="InterPro" id="IPR015795">
    <property type="entry name" value="Pyrv_Knase_C"/>
</dbReference>
<dbReference type="InterPro" id="IPR036918">
    <property type="entry name" value="Pyrv_Knase_C_sf"/>
</dbReference>
<dbReference type="InterPro" id="IPR015806">
    <property type="entry name" value="Pyrv_Knase_insert_dom_sf"/>
</dbReference>
<dbReference type="NCBIfam" id="NF004491">
    <property type="entry name" value="PRK05826.1"/>
    <property type="match status" value="1"/>
</dbReference>
<dbReference type="NCBIfam" id="NF004978">
    <property type="entry name" value="PRK06354.1"/>
    <property type="match status" value="1"/>
</dbReference>
<dbReference type="NCBIfam" id="TIGR01064">
    <property type="entry name" value="pyruv_kin"/>
    <property type="match status" value="1"/>
</dbReference>
<dbReference type="PANTHER" id="PTHR11817">
    <property type="entry name" value="PYRUVATE KINASE"/>
    <property type="match status" value="1"/>
</dbReference>
<dbReference type="Pfam" id="PF00224">
    <property type="entry name" value="PK"/>
    <property type="match status" value="1"/>
</dbReference>
<dbReference type="Pfam" id="PF02887">
    <property type="entry name" value="PK_C"/>
    <property type="match status" value="1"/>
</dbReference>
<dbReference type="PRINTS" id="PR01050">
    <property type="entry name" value="PYRUVTKNASE"/>
</dbReference>
<dbReference type="SUPFAM" id="SSF51621">
    <property type="entry name" value="Phosphoenolpyruvate/pyruvate domain"/>
    <property type="match status" value="1"/>
</dbReference>
<dbReference type="SUPFAM" id="SSF50800">
    <property type="entry name" value="PK beta-barrel domain-like"/>
    <property type="match status" value="1"/>
</dbReference>
<dbReference type="SUPFAM" id="SSF52935">
    <property type="entry name" value="PK C-terminal domain-like"/>
    <property type="match status" value="1"/>
</dbReference>
<gene>
    <name type="primary">pyk</name>
    <name type="synonym">pykA</name>
    <name type="ordered locus">CA_C0518</name>
</gene>
<proteinExistence type="inferred from homology"/>
<keyword id="KW-0067">ATP-binding</keyword>
<keyword id="KW-0324">Glycolysis</keyword>
<keyword id="KW-0418">Kinase</keyword>
<keyword id="KW-0460">Magnesium</keyword>
<keyword id="KW-0479">Metal-binding</keyword>
<keyword id="KW-0547">Nucleotide-binding</keyword>
<keyword id="KW-0630">Potassium</keyword>
<keyword id="KW-0670">Pyruvate</keyword>
<keyword id="KW-1185">Reference proteome</keyword>
<keyword id="KW-0808">Transferase</keyword>
<comment type="catalytic activity">
    <reaction>
        <text>pyruvate + ATP = phosphoenolpyruvate + ADP + H(+)</text>
        <dbReference type="Rhea" id="RHEA:18157"/>
        <dbReference type="ChEBI" id="CHEBI:15361"/>
        <dbReference type="ChEBI" id="CHEBI:15378"/>
        <dbReference type="ChEBI" id="CHEBI:30616"/>
        <dbReference type="ChEBI" id="CHEBI:58702"/>
        <dbReference type="ChEBI" id="CHEBI:456216"/>
        <dbReference type="EC" id="2.7.1.40"/>
    </reaction>
</comment>
<comment type="cofactor">
    <cofactor evidence="1">
        <name>Mg(2+)</name>
        <dbReference type="ChEBI" id="CHEBI:18420"/>
    </cofactor>
</comment>
<comment type="cofactor">
    <cofactor evidence="1">
        <name>K(+)</name>
        <dbReference type="ChEBI" id="CHEBI:29103"/>
    </cofactor>
</comment>
<comment type="pathway">
    <text>Carbohydrate degradation; glycolysis; pyruvate from D-glyceraldehyde 3-phosphate: step 5/5.</text>
</comment>
<comment type="subunit">
    <text evidence="1">Homotetramer.</text>
</comment>
<comment type="similarity">
    <text evidence="3">Belongs to the pyruvate kinase family.</text>
</comment>
<name>KPYK_CLOAB</name>